<dbReference type="EMBL" id="CP000826">
    <property type="protein sequence ID" value="ABV39138.1"/>
    <property type="molecule type" value="Genomic_DNA"/>
</dbReference>
<dbReference type="SMR" id="A8G7P8"/>
<dbReference type="STRING" id="399741.Spro_0028"/>
<dbReference type="KEGG" id="spe:Spro_0028"/>
<dbReference type="eggNOG" id="COG0706">
    <property type="taxonomic scope" value="Bacteria"/>
</dbReference>
<dbReference type="HOGENOM" id="CLU_016535_3_0_6"/>
<dbReference type="OrthoDB" id="9780552at2"/>
<dbReference type="GO" id="GO:0005886">
    <property type="term" value="C:plasma membrane"/>
    <property type="evidence" value="ECO:0007669"/>
    <property type="project" value="UniProtKB-SubCell"/>
</dbReference>
<dbReference type="GO" id="GO:0032977">
    <property type="term" value="F:membrane insertase activity"/>
    <property type="evidence" value="ECO:0007669"/>
    <property type="project" value="InterPro"/>
</dbReference>
<dbReference type="GO" id="GO:0051205">
    <property type="term" value="P:protein insertion into membrane"/>
    <property type="evidence" value="ECO:0007669"/>
    <property type="project" value="TreeGrafter"/>
</dbReference>
<dbReference type="GO" id="GO:0015031">
    <property type="term" value="P:protein transport"/>
    <property type="evidence" value="ECO:0007669"/>
    <property type="project" value="UniProtKB-KW"/>
</dbReference>
<dbReference type="CDD" id="cd20070">
    <property type="entry name" value="5TM_YidC_Alb3"/>
    <property type="match status" value="1"/>
</dbReference>
<dbReference type="CDD" id="cd19961">
    <property type="entry name" value="EcYidC-like_peri"/>
    <property type="match status" value="1"/>
</dbReference>
<dbReference type="FunFam" id="2.70.98.90:FF:000001">
    <property type="entry name" value="Membrane protein insertase YidC"/>
    <property type="match status" value="1"/>
</dbReference>
<dbReference type="Gene3D" id="2.70.98.90">
    <property type="match status" value="1"/>
</dbReference>
<dbReference type="HAMAP" id="MF_01810">
    <property type="entry name" value="YidC_type1"/>
    <property type="match status" value="1"/>
</dbReference>
<dbReference type="InterPro" id="IPR019998">
    <property type="entry name" value="Membr_insert_YidC"/>
</dbReference>
<dbReference type="InterPro" id="IPR028053">
    <property type="entry name" value="Membr_insert_YidC_N"/>
</dbReference>
<dbReference type="InterPro" id="IPR001708">
    <property type="entry name" value="YidC/ALB3/OXA1/COX18"/>
</dbReference>
<dbReference type="InterPro" id="IPR028055">
    <property type="entry name" value="YidC/Oxa/ALB_C"/>
</dbReference>
<dbReference type="InterPro" id="IPR047196">
    <property type="entry name" value="YidC_ALB_C"/>
</dbReference>
<dbReference type="InterPro" id="IPR038221">
    <property type="entry name" value="YidC_periplasmic_sf"/>
</dbReference>
<dbReference type="NCBIfam" id="NF002351">
    <property type="entry name" value="PRK01318.1-1"/>
    <property type="match status" value="1"/>
</dbReference>
<dbReference type="NCBIfam" id="NF002352">
    <property type="entry name" value="PRK01318.1-3"/>
    <property type="match status" value="1"/>
</dbReference>
<dbReference type="NCBIfam" id="TIGR03593">
    <property type="entry name" value="yidC_nterm"/>
    <property type="match status" value="1"/>
</dbReference>
<dbReference type="NCBIfam" id="TIGR03592">
    <property type="entry name" value="yidC_oxa1_cterm"/>
    <property type="match status" value="1"/>
</dbReference>
<dbReference type="PANTHER" id="PTHR12428:SF65">
    <property type="entry name" value="CYTOCHROME C OXIDASE ASSEMBLY PROTEIN COX18, MITOCHONDRIAL"/>
    <property type="match status" value="1"/>
</dbReference>
<dbReference type="PANTHER" id="PTHR12428">
    <property type="entry name" value="OXA1"/>
    <property type="match status" value="1"/>
</dbReference>
<dbReference type="Pfam" id="PF02096">
    <property type="entry name" value="60KD_IMP"/>
    <property type="match status" value="1"/>
</dbReference>
<dbReference type="Pfam" id="PF14849">
    <property type="entry name" value="YidC_periplas"/>
    <property type="match status" value="1"/>
</dbReference>
<dbReference type="PRINTS" id="PR00701">
    <property type="entry name" value="60KDINNERMP"/>
</dbReference>
<dbReference type="PRINTS" id="PR01900">
    <property type="entry name" value="YIDCPROTEIN"/>
</dbReference>
<evidence type="ECO:0000255" key="1">
    <source>
        <dbReference type="HAMAP-Rule" id="MF_01810"/>
    </source>
</evidence>
<evidence type="ECO:0000256" key="2">
    <source>
        <dbReference type="SAM" id="MobiDB-lite"/>
    </source>
</evidence>
<gene>
    <name evidence="1" type="primary">yidC</name>
    <name type="ordered locus">Spro_0028</name>
</gene>
<comment type="function">
    <text evidence="1">Required for the insertion and/or proper folding and/or complex formation of integral membrane proteins into the membrane. Involved in integration of membrane proteins that insert both dependently and independently of the Sec translocase complex, as well as at least some lipoproteins. Aids folding of multispanning membrane proteins.</text>
</comment>
<comment type="subunit">
    <text evidence="1">Interacts with the Sec translocase complex via SecD. Specifically interacts with transmembrane segments of nascent integral membrane proteins during membrane integration.</text>
</comment>
<comment type="subcellular location">
    <subcellularLocation>
        <location evidence="1">Cell inner membrane</location>
        <topology evidence="1">Multi-pass membrane protein</topology>
    </subcellularLocation>
</comment>
<comment type="similarity">
    <text evidence="1">Belongs to the OXA1/ALB3/YidC family. Type 1 subfamily.</text>
</comment>
<accession>A8G7P8</accession>
<protein>
    <recommendedName>
        <fullName evidence="1">Membrane protein insertase YidC</fullName>
    </recommendedName>
    <alternativeName>
        <fullName evidence="1">Foldase YidC</fullName>
    </alternativeName>
    <alternativeName>
        <fullName evidence="1">Membrane integrase YidC</fullName>
    </alternativeName>
    <alternativeName>
        <fullName evidence="1">Membrane protein YidC</fullName>
    </alternativeName>
</protein>
<keyword id="KW-0997">Cell inner membrane</keyword>
<keyword id="KW-1003">Cell membrane</keyword>
<keyword id="KW-0143">Chaperone</keyword>
<keyword id="KW-0472">Membrane</keyword>
<keyword id="KW-0653">Protein transport</keyword>
<keyword id="KW-0812">Transmembrane</keyword>
<keyword id="KW-1133">Transmembrane helix</keyword>
<keyword id="KW-0813">Transport</keyword>
<name>YIDC_SERP5</name>
<reference key="1">
    <citation type="submission" date="2007-09" db="EMBL/GenBank/DDBJ databases">
        <title>Complete sequence of chromosome of Serratia proteamaculans 568.</title>
        <authorList>
            <consortium name="US DOE Joint Genome Institute"/>
            <person name="Copeland A."/>
            <person name="Lucas S."/>
            <person name="Lapidus A."/>
            <person name="Barry K."/>
            <person name="Glavina del Rio T."/>
            <person name="Dalin E."/>
            <person name="Tice H."/>
            <person name="Pitluck S."/>
            <person name="Chain P."/>
            <person name="Malfatti S."/>
            <person name="Shin M."/>
            <person name="Vergez L."/>
            <person name="Schmutz J."/>
            <person name="Larimer F."/>
            <person name="Land M."/>
            <person name="Hauser L."/>
            <person name="Kyrpides N."/>
            <person name="Kim E."/>
            <person name="Taghavi S."/>
            <person name="Newman L."/>
            <person name="Vangronsveld J."/>
            <person name="van der Lelie D."/>
            <person name="Richardson P."/>
        </authorList>
    </citation>
    <scope>NUCLEOTIDE SEQUENCE [LARGE SCALE GENOMIC DNA]</scope>
    <source>
        <strain>568</strain>
    </source>
</reference>
<organism>
    <name type="scientific">Serratia proteamaculans (strain 568)</name>
    <dbReference type="NCBI Taxonomy" id="399741"/>
    <lineage>
        <taxon>Bacteria</taxon>
        <taxon>Pseudomonadati</taxon>
        <taxon>Pseudomonadota</taxon>
        <taxon>Gammaproteobacteria</taxon>
        <taxon>Enterobacterales</taxon>
        <taxon>Yersiniaceae</taxon>
        <taxon>Serratia</taxon>
    </lineage>
</organism>
<feature type="chain" id="PRO_1000070164" description="Membrane protein insertase YidC">
    <location>
        <begin position="1"/>
        <end position="545"/>
    </location>
</feature>
<feature type="transmembrane region" description="Helical" evidence="1">
    <location>
        <begin position="6"/>
        <end position="26"/>
    </location>
</feature>
<feature type="transmembrane region" description="Helical" evidence="1">
    <location>
        <begin position="342"/>
        <end position="362"/>
    </location>
</feature>
<feature type="transmembrane region" description="Helical" evidence="1">
    <location>
        <begin position="417"/>
        <end position="437"/>
    </location>
</feature>
<feature type="transmembrane region" description="Helical" evidence="1">
    <location>
        <begin position="455"/>
        <end position="475"/>
    </location>
</feature>
<feature type="transmembrane region" description="Helical" evidence="1">
    <location>
        <begin position="496"/>
        <end position="516"/>
    </location>
</feature>
<feature type="region of interest" description="Disordered" evidence="2">
    <location>
        <begin position="31"/>
        <end position="54"/>
    </location>
</feature>
<proteinExistence type="inferred from homology"/>
<sequence length="545" mass="61143">MDSQRNLLLIALLFVSFMIWQAWQTDNAPQPVAQTTQQTSNPATGDAASSAVPASGQGKLITVNTDVLSLTINTRGGDIEQAKLLAYPDTLGSSTPFQLLETTPAFVYQAQSGLTGRNGPDNPANGERPLFQAAQDSYTLPEGQEELRIPLTFTGKDGAIYTKTFVLKRNHYAVAVDYNVDNKSTTPLELTLFGQLKQTTELPKHRDTGSNNFALHTFRGAAYSSSDDKYQKYAFDKDENLSVTTQGGWVAMLQQYFATAWVPATQGSNTFYTAKPGDNLSTIGFKSTPVVVQPGAQQQLNATLWVGPELQDQMAQLAPHLDLTVDYGWLWFISQPLFKLLKFIHGFIGNWGFSIIIITFIVRGIMYPLTKAQYTSMAKMRMLQPKLQAMRERIGDDKQRMSQEMMALYKSEKVNPLGGCLPLVIQMPIFLALYYMLMGSVELRHAPFALWIHDLSAQDPYYILPILMGVTMFFIQKMSPTTVTDPMQQKIMTFMPVIFTVFFLWFPSGLVLYYIVSNLVTILQQQLIYRGLEKRGLHSRDKKKT</sequence>